<name>DADA_PECAS</name>
<feature type="chain" id="PRO_1000066095" description="D-amino acid dehydrogenase">
    <location>
        <begin position="1"/>
        <end position="417"/>
    </location>
</feature>
<feature type="binding site" evidence="1">
    <location>
        <begin position="3"/>
        <end position="17"/>
    </location>
    <ligand>
        <name>FAD</name>
        <dbReference type="ChEBI" id="CHEBI:57692"/>
    </ligand>
</feature>
<keyword id="KW-0274">FAD</keyword>
<keyword id="KW-0285">Flavoprotein</keyword>
<keyword id="KW-0560">Oxidoreductase</keyword>
<keyword id="KW-1185">Reference proteome</keyword>
<evidence type="ECO:0000255" key="1">
    <source>
        <dbReference type="HAMAP-Rule" id="MF_01202"/>
    </source>
</evidence>
<accession>Q6D4N9</accession>
<sequence length="417" mass="45920">MRVVILGSGVVGVSTAWYLAQAGHDVTVIDRQPEPALETSAGNAGQISPGYAAPWAAPGIPLKAIKWMFQRHAPLAIRPDFTTAQLCWMWQMLLNCDARHYKTNKARMVRLAEYSRDCLQQLRRDTGIQYEGRQGGTLQLFRTEQQYDNATRDIAVLEEAGVPYQLLARHELASVEPALANIVGTLTGGLRLPHDETGDCQLFTRQLAAMAAEAGVTFKLGRNVRQLRVEGQSVTGVQCDDEMIVADAYVMACGSYSTGLLRQWFDIPVYPLKGYSLTIPLADDASAPVSTVLDETYKVAITRFDNRIRVGGMAEVVGFNTDLNPKRRETLEMVVRDLYPHCGPIEQATFWTGLRPMTPDGTPLVGRSPLKNLYLNTGHGTLGWTMACGSGKLLADILSDKSPEIEADDLSVSRYTR</sequence>
<proteinExistence type="inferred from homology"/>
<organism>
    <name type="scientific">Pectobacterium atrosepticum (strain SCRI 1043 / ATCC BAA-672)</name>
    <name type="common">Erwinia carotovora subsp. atroseptica</name>
    <dbReference type="NCBI Taxonomy" id="218491"/>
    <lineage>
        <taxon>Bacteria</taxon>
        <taxon>Pseudomonadati</taxon>
        <taxon>Pseudomonadota</taxon>
        <taxon>Gammaproteobacteria</taxon>
        <taxon>Enterobacterales</taxon>
        <taxon>Pectobacteriaceae</taxon>
        <taxon>Pectobacterium</taxon>
    </lineage>
</organism>
<gene>
    <name evidence="1" type="primary">dadA</name>
    <name type="ordered locus">ECA2351</name>
</gene>
<comment type="function">
    <text evidence="1">Oxidative deamination of D-amino acids.</text>
</comment>
<comment type="catalytic activity">
    <reaction evidence="1">
        <text>a D-alpha-amino acid + A + H2O = a 2-oxocarboxylate + AH2 + NH4(+)</text>
        <dbReference type="Rhea" id="RHEA:18125"/>
        <dbReference type="ChEBI" id="CHEBI:13193"/>
        <dbReference type="ChEBI" id="CHEBI:15377"/>
        <dbReference type="ChEBI" id="CHEBI:17499"/>
        <dbReference type="ChEBI" id="CHEBI:28938"/>
        <dbReference type="ChEBI" id="CHEBI:35179"/>
        <dbReference type="ChEBI" id="CHEBI:59871"/>
    </reaction>
</comment>
<comment type="cofactor">
    <cofactor evidence="1">
        <name>FAD</name>
        <dbReference type="ChEBI" id="CHEBI:57692"/>
    </cofactor>
</comment>
<comment type="pathway">
    <text>Amino-acid degradation; D-alanine degradation; NH(3) and pyruvate from D-alanine: step 1/1.</text>
</comment>
<comment type="similarity">
    <text evidence="1">Belongs to the DadA oxidoreductase family.</text>
</comment>
<reference key="1">
    <citation type="journal article" date="2004" name="Proc. Natl. Acad. Sci. U.S.A.">
        <title>Genome sequence of the enterobacterial phytopathogen Erwinia carotovora subsp. atroseptica and characterization of virulence factors.</title>
        <authorList>
            <person name="Bell K.S."/>
            <person name="Sebaihia M."/>
            <person name="Pritchard L."/>
            <person name="Holden M.T.G."/>
            <person name="Hyman L.J."/>
            <person name="Holeva M.C."/>
            <person name="Thomson N.R."/>
            <person name="Bentley S.D."/>
            <person name="Churcher L.J.C."/>
            <person name="Mungall K."/>
            <person name="Atkin R."/>
            <person name="Bason N."/>
            <person name="Brooks K."/>
            <person name="Chillingworth T."/>
            <person name="Clark K."/>
            <person name="Doggett J."/>
            <person name="Fraser A."/>
            <person name="Hance Z."/>
            <person name="Hauser H."/>
            <person name="Jagels K."/>
            <person name="Moule S."/>
            <person name="Norbertczak H."/>
            <person name="Ormond D."/>
            <person name="Price C."/>
            <person name="Quail M.A."/>
            <person name="Sanders M."/>
            <person name="Walker D."/>
            <person name="Whitehead S."/>
            <person name="Salmond G.P.C."/>
            <person name="Birch P.R.J."/>
            <person name="Parkhill J."/>
            <person name="Toth I.K."/>
        </authorList>
    </citation>
    <scope>NUCLEOTIDE SEQUENCE [LARGE SCALE GENOMIC DNA]</scope>
    <source>
        <strain>SCRI 1043 / ATCC BAA-672</strain>
    </source>
</reference>
<dbReference type="EC" id="1.4.99.-" evidence="1"/>
<dbReference type="EMBL" id="BX950851">
    <property type="protein sequence ID" value="CAG75254.1"/>
    <property type="molecule type" value="Genomic_DNA"/>
</dbReference>
<dbReference type="RefSeq" id="WP_011093908.1">
    <property type="nucleotide sequence ID" value="NC_004547.2"/>
</dbReference>
<dbReference type="SMR" id="Q6D4N9"/>
<dbReference type="STRING" id="218491.ECA2351"/>
<dbReference type="KEGG" id="eca:ECA2351"/>
<dbReference type="PATRIC" id="fig|218491.5.peg.2377"/>
<dbReference type="eggNOG" id="COG0665">
    <property type="taxonomic scope" value="Bacteria"/>
</dbReference>
<dbReference type="HOGENOM" id="CLU_007884_9_2_6"/>
<dbReference type="OrthoDB" id="9805337at2"/>
<dbReference type="UniPathway" id="UPA00043">
    <property type="reaction ID" value="UER00498"/>
</dbReference>
<dbReference type="Proteomes" id="UP000007966">
    <property type="component" value="Chromosome"/>
</dbReference>
<dbReference type="GO" id="GO:0005737">
    <property type="term" value="C:cytoplasm"/>
    <property type="evidence" value="ECO:0007669"/>
    <property type="project" value="TreeGrafter"/>
</dbReference>
<dbReference type="GO" id="GO:0005886">
    <property type="term" value="C:plasma membrane"/>
    <property type="evidence" value="ECO:0007669"/>
    <property type="project" value="TreeGrafter"/>
</dbReference>
<dbReference type="GO" id="GO:0008718">
    <property type="term" value="F:D-amino-acid dehydrogenase activity"/>
    <property type="evidence" value="ECO:0007669"/>
    <property type="project" value="UniProtKB-UniRule"/>
</dbReference>
<dbReference type="GO" id="GO:0055130">
    <property type="term" value="P:D-alanine catabolic process"/>
    <property type="evidence" value="ECO:0007669"/>
    <property type="project" value="UniProtKB-UniPathway"/>
</dbReference>
<dbReference type="FunFam" id="3.50.50.60:FF:000020">
    <property type="entry name" value="D-amino acid dehydrogenase"/>
    <property type="match status" value="1"/>
</dbReference>
<dbReference type="Gene3D" id="3.30.9.10">
    <property type="entry name" value="D-Amino Acid Oxidase, subunit A, domain 2"/>
    <property type="match status" value="1"/>
</dbReference>
<dbReference type="Gene3D" id="3.50.50.60">
    <property type="entry name" value="FAD/NAD(P)-binding domain"/>
    <property type="match status" value="2"/>
</dbReference>
<dbReference type="HAMAP" id="MF_01202">
    <property type="entry name" value="DadA"/>
    <property type="match status" value="1"/>
</dbReference>
<dbReference type="InterPro" id="IPR023080">
    <property type="entry name" value="DadA"/>
</dbReference>
<dbReference type="InterPro" id="IPR006076">
    <property type="entry name" value="FAD-dep_OxRdtase"/>
</dbReference>
<dbReference type="InterPro" id="IPR036188">
    <property type="entry name" value="FAD/NAD-bd_sf"/>
</dbReference>
<dbReference type="NCBIfam" id="NF001933">
    <property type="entry name" value="PRK00711.1"/>
    <property type="match status" value="1"/>
</dbReference>
<dbReference type="PANTHER" id="PTHR13847:SF280">
    <property type="entry name" value="D-AMINO ACID DEHYDROGENASE"/>
    <property type="match status" value="1"/>
</dbReference>
<dbReference type="PANTHER" id="PTHR13847">
    <property type="entry name" value="SARCOSINE DEHYDROGENASE-RELATED"/>
    <property type="match status" value="1"/>
</dbReference>
<dbReference type="Pfam" id="PF01266">
    <property type="entry name" value="DAO"/>
    <property type="match status" value="1"/>
</dbReference>
<dbReference type="SUPFAM" id="SSF54373">
    <property type="entry name" value="FAD-linked reductases, C-terminal domain"/>
    <property type="match status" value="1"/>
</dbReference>
<dbReference type="SUPFAM" id="SSF51905">
    <property type="entry name" value="FAD/NAD(P)-binding domain"/>
    <property type="match status" value="1"/>
</dbReference>
<protein>
    <recommendedName>
        <fullName evidence="1">D-amino acid dehydrogenase</fullName>
        <ecNumber evidence="1">1.4.99.-</ecNumber>
    </recommendedName>
</protein>